<organism>
    <name type="scientific">Homo sapiens</name>
    <name type="common">Human</name>
    <dbReference type="NCBI Taxonomy" id="9606"/>
    <lineage>
        <taxon>Eukaryota</taxon>
        <taxon>Metazoa</taxon>
        <taxon>Chordata</taxon>
        <taxon>Craniata</taxon>
        <taxon>Vertebrata</taxon>
        <taxon>Euteleostomi</taxon>
        <taxon>Mammalia</taxon>
        <taxon>Eutheria</taxon>
        <taxon>Euarchontoglires</taxon>
        <taxon>Primates</taxon>
        <taxon>Haplorrhini</taxon>
        <taxon>Catarrhini</taxon>
        <taxon>Hominidae</taxon>
        <taxon>Homo</taxon>
    </lineage>
</organism>
<accession>Q96PQ1</accession>
<accession>Q8IYH7</accession>
<proteinExistence type="evidence at protein level"/>
<gene>
    <name type="primary">SIGLEC12</name>
    <name type="synonym">SIGLECL1</name>
    <name type="synonym">SLG</name>
    <name type="ORF">UNQ9215/PRO34042</name>
</gene>
<keyword id="KW-0025">Alternative splicing</keyword>
<keyword id="KW-0130">Cell adhesion</keyword>
<keyword id="KW-1015">Disulfide bond</keyword>
<keyword id="KW-0325">Glycoprotein</keyword>
<keyword id="KW-0393">Immunoglobulin domain</keyword>
<keyword id="KW-0430">Lectin</keyword>
<keyword id="KW-0472">Membrane</keyword>
<keyword id="KW-0597">Phosphoprotein</keyword>
<keyword id="KW-1267">Proteomics identification</keyword>
<keyword id="KW-1185">Reference proteome</keyword>
<keyword id="KW-0677">Repeat</keyword>
<keyword id="KW-0732">Signal</keyword>
<keyword id="KW-0812">Transmembrane</keyword>
<keyword id="KW-1133">Transmembrane helix</keyword>
<name>SIG12_HUMAN</name>
<protein>
    <recommendedName>
        <fullName>Sialic acid-binding Ig-like lectin 12</fullName>
        <shortName>Siglec-12</shortName>
    </recommendedName>
    <alternativeName>
        <fullName>Sialic acid-binding Ig-like lectin-like 1</fullName>
        <shortName>Siglec-L1</shortName>
    </alternativeName>
</protein>
<sequence>MLLLLLLLPPLLCGRVGAKEQKDYLLTMQKSVTVQEGLCVSVLCSFSYPQNGWTASDPVHGYWFRAGDHVSRNIPVATNNPARAVQEETRDRFHLLGDPQNKDCTLSIRDTRESDAGTYVFCVERGNMKWNYKYDQLSVNVTASQDLLSRYRLEVPESVTVQEGLCVSVPCSVLYPHYNWTASSPVYGSWFKEGADIPWDIPVATNTPSGKVQEDTHGRFLLLGDPQTNNCSLSIRDARKGDSGKYYFQVERGSRKWNYIYDKLSVHVTALTHMPTFSIPGTLESGHPRNLTCSVPWACEQGTPPTITWMGASVSSLDPTITRSSMLSLIPQPQDHGTSLTCQVTLPGAGVTMTRAVRLNISYPPQNLTMTVFQGDGTASTTLRNGSALSVLEGQSLHLVCAVDSNPPARLSWTWGSLTLSPSQSSNLGVLELPRVHVKDEGEFTCRAQNPLGSQHISLSLSLQNEYTGKMRPISGVTLGAFGGAGATALVFLYFCIIFVVVRSCRKKSARPAVGVGDTGMEDANAVRGSASQGPLIESPADDSPPHHAPPALATPSPEEGEIQYASLSFHKARPQYPQEQEAIGYEYSEINIPK</sequence>
<reference key="1">
    <citation type="journal article" date="2001" name="Biochem. Biophys. Res. Commun.">
        <title>Cloning and molecular characterization of two splice variants of a new putative member of the Siglec-3-like subgroup of Siglecs.</title>
        <authorList>
            <person name="Foussias G."/>
            <person name="Taylor S.M."/>
            <person name="Yousef G.M."/>
            <person name="Tropak M.B."/>
            <person name="Ordon M.H."/>
            <person name="Diamandis E.P."/>
        </authorList>
    </citation>
    <scope>NUCLEOTIDE SEQUENCE [GENOMIC DNA] (ISOFORMS LONG AND SHORT)</scope>
    <source>
        <tissue>Bone marrow</tissue>
    </source>
</reference>
<reference key="2">
    <citation type="journal article" date="2001" name="J. Biol. Chem.">
        <title>A second uniquely human mutation affecting sialic acid biology.</title>
        <authorList>
            <person name="Angata T."/>
            <person name="Varki N.M."/>
            <person name="Varki A."/>
        </authorList>
    </citation>
    <scope>NUCLEOTIDE SEQUENCE [MRNA] (ISOFORM LONG)</scope>
</reference>
<reference key="3">
    <citation type="journal article" date="2003" name="Genome Res.">
        <title>The secreted protein discovery initiative (SPDI), a large-scale effort to identify novel human secreted and transmembrane proteins: a bioinformatics assessment.</title>
        <authorList>
            <person name="Clark H.F."/>
            <person name="Gurney A.L."/>
            <person name="Abaya E."/>
            <person name="Baker K."/>
            <person name="Baldwin D.T."/>
            <person name="Brush J."/>
            <person name="Chen J."/>
            <person name="Chow B."/>
            <person name="Chui C."/>
            <person name="Crowley C."/>
            <person name="Currell B."/>
            <person name="Deuel B."/>
            <person name="Dowd P."/>
            <person name="Eaton D."/>
            <person name="Foster J.S."/>
            <person name="Grimaldi C."/>
            <person name="Gu Q."/>
            <person name="Hass P.E."/>
            <person name="Heldens S."/>
            <person name="Huang A."/>
            <person name="Kim H.S."/>
            <person name="Klimowski L."/>
            <person name="Jin Y."/>
            <person name="Johnson S."/>
            <person name="Lee J."/>
            <person name="Lewis L."/>
            <person name="Liao D."/>
            <person name="Mark M.R."/>
            <person name="Robbie E."/>
            <person name="Sanchez C."/>
            <person name="Schoenfeld J."/>
            <person name="Seshagiri S."/>
            <person name="Simmons L."/>
            <person name="Singh J."/>
            <person name="Smith V."/>
            <person name="Stinson J."/>
            <person name="Vagts A."/>
            <person name="Vandlen R.L."/>
            <person name="Watanabe C."/>
            <person name="Wieand D."/>
            <person name="Woods K."/>
            <person name="Xie M.-H."/>
            <person name="Yansura D.G."/>
            <person name="Yi S."/>
            <person name="Yu G."/>
            <person name="Yuan J."/>
            <person name="Zhang M."/>
            <person name="Zhang Z."/>
            <person name="Goddard A.D."/>
            <person name="Wood W.I."/>
            <person name="Godowski P.J."/>
            <person name="Gray A.M."/>
        </authorList>
    </citation>
    <scope>NUCLEOTIDE SEQUENCE [LARGE SCALE MRNA] (ISOFORM LONG)</scope>
</reference>
<reference key="4">
    <citation type="journal article" date="2004" name="Genome Res.">
        <title>The status, quality, and expansion of the NIH full-length cDNA project: the Mammalian Gene Collection (MGC).</title>
        <authorList>
            <consortium name="The MGC Project Team"/>
        </authorList>
    </citation>
    <scope>NUCLEOTIDE SEQUENCE [LARGE SCALE MRNA] (ISOFORM LONG)</scope>
    <source>
        <tissue>Blood</tissue>
    </source>
</reference>
<dbReference type="EMBL" id="AF277806">
    <property type="protein sequence ID" value="AAK51233.1"/>
    <property type="molecule type" value="Genomic_DNA"/>
</dbReference>
<dbReference type="EMBL" id="AF277806">
    <property type="protein sequence ID" value="AAK51234.1"/>
    <property type="molecule type" value="Genomic_DNA"/>
</dbReference>
<dbReference type="EMBL" id="AF282256">
    <property type="protein sequence ID" value="AAK71521.1"/>
    <property type="molecule type" value="mRNA"/>
</dbReference>
<dbReference type="EMBL" id="AY358140">
    <property type="protein sequence ID" value="AAQ88507.1"/>
    <property type="molecule type" value="mRNA"/>
</dbReference>
<dbReference type="EMBL" id="BC035809">
    <property type="protein sequence ID" value="AAH35809.2"/>
    <property type="molecule type" value="mRNA"/>
</dbReference>
<dbReference type="CCDS" id="CCDS12833.1">
    <molecule id="Q96PQ1-1"/>
</dbReference>
<dbReference type="CCDS" id="CCDS59416.1">
    <molecule id="Q96PQ1-2"/>
</dbReference>
<dbReference type="RefSeq" id="NP_201586.1">
    <molecule id="Q96PQ1-2"/>
    <property type="nucleotide sequence ID" value="NM_033329.2"/>
</dbReference>
<dbReference type="RefSeq" id="NP_443729.1">
    <molecule id="Q96PQ1-1"/>
    <property type="nucleotide sequence ID" value="NM_053003.4"/>
</dbReference>
<dbReference type="RefSeq" id="XP_011525743.1">
    <property type="nucleotide sequence ID" value="XM_011527441.2"/>
</dbReference>
<dbReference type="SMR" id="Q96PQ1"/>
<dbReference type="BioGRID" id="124623">
    <property type="interactions" value="72"/>
</dbReference>
<dbReference type="FunCoup" id="Q96PQ1">
    <property type="interactions" value="416"/>
</dbReference>
<dbReference type="IntAct" id="Q96PQ1">
    <property type="interactions" value="23"/>
</dbReference>
<dbReference type="STRING" id="9606.ENSP00000291707"/>
<dbReference type="GlyCosmos" id="Q96PQ1">
    <property type="glycosylation" value="7 sites, No reported glycans"/>
</dbReference>
<dbReference type="GlyGen" id="Q96PQ1">
    <property type="glycosylation" value="12 sites, 1 O-linked glycan (4 sites)"/>
</dbReference>
<dbReference type="iPTMnet" id="Q96PQ1"/>
<dbReference type="PhosphoSitePlus" id="Q96PQ1"/>
<dbReference type="BioMuta" id="SIGLEC12"/>
<dbReference type="DMDM" id="25009264"/>
<dbReference type="MassIVE" id="Q96PQ1"/>
<dbReference type="PaxDb" id="9606-ENSP00000291707"/>
<dbReference type="PeptideAtlas" id="Q96PQ1"/>
<dbReference type="ProteomicsDB" id="77728">
    <molecule id="Q96PQ1-1"/>
</dbReference>
<dbReference type="ProteomicsDB" id="77729">
    <molecule id="Q96PQ1-2"/>
</dbReference>
<dbReference type="Antibodypedia" id="52796">
    <property type="antibodies" value="204 antibodies from 27 providers"/>
</dbReference>
<dbReference type="DNASU" id="89858"/>
<dbReference type="Ensembl" id="ENST00000291707.8">
    <molecule id="Q96PQ1-1"/>
    <property type="protein sequence ID" value="ENSP00000291707.3"/>
    <property type="gene ID" value="ENSG00000254521.7"/>
</dbReference>
<dbReference type="Ensembl" id="ENST00000598614.1">
    <molecule id="Q96PQ1-2"/>
    <property type="protein sequence ID" value="ENSP00000472873.1"/>
    <property type="gene ID" value="ENSG00000254521.7"/>
</dbReference>
<dbReference type="GeneID" id="89858"/>
<dbReference type="KEGG" id="hsa:89858"/>
<dbReference type="MANE-Select" id="ENST00000291707.8">
    <property type="protein sequence ID" value="ENSP00000291707.3"/>
    <property type="RefSeq nucleotide sequence ID" value="NM_053003.4"/>
    <property type="RefSeq protein sequence ID" value="NP_443729.1"/>
</dbReference>
<dbReference type="UCSC" id="uc002pww.3">
    <molecule id="Q96PQ1-1"/>
    <property type="organism name" value="human"/>
</dbReference>
<dbReference type="AGR" id="HGNC:15482"/>
<dbReference type="CTD" id="89858"/>
<dbReference type="DisGeNET" id="89858"/>
<dbReference type="GeneCards" id="SIGLEC12"/>
<dbReference type="HGNC" id="HGNC:15482">
    <property type="gene designation" value="SIGLEC12"/>
</dbReference>
<dbReference type="HPA" id="ENSG00000254521">
    <property type="expression patterns" value="Tissue enhanced (intestine, lymphoid tissue)"/>
</dbReference>
<dbReference type="MIM" id="606094">
    <property type="type" value="gene"/>
</dbReference>
<dbReference type="neXtProt" id="NX_Q96PQ1"/>
<dbReference type="OpenTargets" id="ENSG00000254521"/>
<dbReference type="PharmGKB" id="PA37966"/>
<dbReference type="VEuPathDB" id="HostDB:ENSG00000254521"/>
<dbReference type="eggNOG" id="ENOG502S41V">
    <property type="taxonomic scope" value="Eukaryota"/>
</dbReference>
<dbReference type="GeneTree" id="ENSGT01080000257333"/>
<dbReference type="HOGENOM" id="CLU_024444_6_1_1"/>
<dbReference type="InParanoid" id="Q96PQ1"/>
<dbReference type="OMA" id="RSESWAN"/>
<dbReference type="OrthoDB" id="10012075at2759"/>
<dbReference type="PAN-GO" id="Q96PQ1">
    <property type="GO annotations" value="3 GO annotations based on evolutionary models"/>
</dbReference>
<dbReference type="PhylomeDB" id="Q96PQ1"/>
<dbReference type="PathwayCommons" id="Q96PQ1"/>
<dbReference type="Reactome" id="R-HSA-198933">
    <property type="pathway name" value="Immunoregulatory interactions between a Lymphoid and a non-Lymphoid cell"/>
</dbReference>
<dbReference type="SignaLink" id="Q96PQ1"/>
<dbReference type="BioGRID-ORCS" id="89858">
    <property type="hits" value="7 hits in 1148 CRISPR screens"/>
</dbReference>
<dbReference type="GeneWiki" id="Sialic_acid-binding_Ig-like_lectin_12"/>
<dbReference type="GenomeRNAi" id="89858"/>
<dbReference type="Pharos" id="Q96PQ1">
    <property type="development level" value="Tbio"/>
</dbReference>
<dbReference type="PRO" id="PR:Q96PQ1"/>
<dbReference type="Proteomes" id="UP000005640">
    <property type="component" value="Chromosome 19"/>
</dbReference>
<dbReference type="RNAct" id="Q96PQ1">
    <property type="molecule type" value="protein"/>
</dbReference>
<dbReference type="Bgee" id="ENSG00000254521">
    <property type="expression patterns" value="Expressed in spleen and 71 other cell types or tissues"/>
</dbReference>
<dbReference type="ExpressionAtlas" id="Q96PQ1">
    <property type="expression patterns" value="baseline and differential"/>
</dbReference>
<dbReference type="GO" id="GO:0005886">
    <property type="term" value="C:plasma membrane"/>
    <property type="evidence" value="ECO:0000318"/>
    <property type="project" value="GO_Central"/>
</dbReference>
<dbReference type="GO" id="GO:0030246">
    <property type="term" value="F:carbohydrate binding"/>
    <property type="evidence" value="ECO:0007669"/>
    <property type="project" value="UniProtKB-KW"/>
</dbReference>
<dbReference type="GO" id="GO:0033691">
    <property type="term" value="F:sialic acid binding"/>
    <property type="evidence" value="ECO:0000318"/>
    <property type="project" value="GO_Central"/>
</dbReference>
<dbReference type="GO" id="GO:0007155">
    <property type="term" value="P:cell adhesion"/>
    <property type="evidence" value="ECO:0000318"/>
    <property type="project" value="GO_Central"/>
</dbReference>
<dbReference type="CDD" id="cd05712">
    <property type="entry name" value="IgV_CD33"/>
    <property type="match status" value="1"/>
</dbReference>
<dbReference type="FunFam" id="2.60.40.10:FF:000912">
    <property type="entry name" value="Myeloid cell surface antigen CD33"/>
    <property type="match status" value="1"/>
</dbReference>
<dbReference type="FunFam" id="2.60.40.10:FF:001240">
    <property type="entry name" value="Sialic acid binding Ig-like lectin E"/>
    <property type="match status" value="1"/>
</dbReference>
<dbReference type="FunFam" id="2.60.40.10:FF:000829">
    <property type="entry name" value="Sialic acid-binding Ig-like lectin 8"/>
    <property type="match status" value="2"/>
</dbReference>
<dbReference type="Gene3D" id="2.60.40.10">
    <property type="entry name" value="Immunoglobulins"/>
    <property type="match status" value="4"/>
</dbReference>
<dbReference type="InterPro" id="IPR007110">
    <property type="entry name" value="Ig-like_dom"/>
</dbReference>
<dbReference type="InterPro" id="IPR036179">
    <property type="entry name" value="Ig-like_dom_sf"/>
</dbReference>
<dbReference type="InterPro" id="IPR013783">
    <property type="entry name" value="Ig-like_fold"/>
</dbReference>
<dbReference type="InterPro" id="IPR003599">
    <property type="entry name" value="Ig_sub"/>
</dbReference>
<dbReference type="InterPro" id="IPR003598">
    <property type="entry name" value="Ig_sub2"/>
</dbReference>
<dbReference type="InterPro" id="IPR013106">
    <property type="entry name" value="Ig_V-set"/>
</dbReference>
<dbReference type="InterPro" id="IPR051036">
    <property type="entry name" value="SIGLEC"/>
</dbReference>
<dbReference type="PANTHER" id="PTHR12035">
    <property type="entry name" value="SIALIC ACID BINDING IMMUNOGLOBULIN-LIKE LECTIN"/>
    <property type="match status" value="1"/>
</dbReference>
<dbReference type="PANTHER" id="PTHR12035:SF53">
    <property type="entry name" value="SIALIC ACID-BINDING IG-LIKE LECTIN 12"/>
    <property type="match status" value="1"/>
</dbReference>
<dbReference type="Pfam" id="PF13927">
    <property type="entry name" value="Ig_3"/>
    <property type="match status" value="1"/>
</dbReference>
<dbReference type="Pfam" id="PF07686">
    <property type="entry name" value="V-set"/>
    <property type="match status" value="2"/>
</dbReference>
<dbReference type="SMART" id="SM00409">
    <property type="entry name" value="IG"/>
    <property type="match status" value="4"/>
</dbReference>
<dbReference type="SMART" id="SM00408">
    <property type="entry name" value="IGc2"/>
    <property type="match status" value="3"/>
</dbReference>
<dbReference type="SUPFAM" id="SSF48726">
    <property type="entry name" value="Immunoglobulin"/>
    <property type="match status" value="4"/>
</dbReference>
<dbReference type="PROSITE" id="PS50835">
    <property type="entry name" value="IG_LIKE"/>
    <property type="match status" value="3"/>
</dbReference>
<evidence type="ECO:0000250" key="1">
    <source>
        <dbReference type="UniProtKB" id="Q91Y57"/>
    </source>
</evidence>
<evidence type="ECO:0000255" key="2"/>
<evidence type="ECO:0000255" key="3">
    <source>
        <dbReference type="PROSITE-ProRule" id="PRU00114"/>
    </source>
</evidence>
<evidence type="ECO:0000256" key="4">
    <source>
        <dbReference type="SAM" id="MobiDB-lite"/>
    </source>
</evidence>
<evidence type="ECO:0000305" key="5"/>
<feature type="signal peptide" evidence="2">
    <location>
        <begin position="1"/>
        <end position="18"/>
    </location>
</feature>
<feature type="chain" id="PRO_0000014953" description="Sialic acid-binding Ig-like lectin 12">
    <location>
        <begin position="19"/>
        <end position="595"/>
    </location>
</feature>
<feature type="topological domain" description="Extracellular" evidence="2">
    <location>
        <begin position="19"/>
        <end position="481"/>
    </location>
</feature>
<feature type="transmembrane region" description="Helical" evidence="2">
    <location>
        <begin position="482"/>
        <end position="502"/>
    </location>
</feature>
<feature type="topological domain" description="Cytoplasmic" evidence="2">
    <location>
        <begin position="503"/>
        <end position="595"/>
    </location>
</feature>
<feature type="domain" description="Ig-like V-type 1">
    <location>
        <begin position="19"/>
        <end position="142"/>
    </location>
</feature>
<feature type="domain" description="Ig-like V-type 2">
    <location>
        <begin position="143"/>
        <end position="269"/>
    </location>
</feature>
<feature type="domain" description="Ig-like C2-type 1">
    <location>
        <begin position="275"/>
        <end position="358"/>
    </location>
</feature>
<feature type="domain" description="Ig-like C2-type 2">
    <location>
        <begin position="365"/>
        <end position="462"/>
    </location>
</feature>
<feature type="region of interest" description="Disordered" evidence="4">
    <location>
        <begin position="512"/>
        <end position="560"/>
    </location>
</feature>
<feature type="short sequence motif" description="ITIM motif">
    <location>
        <begin position="563"/>
        <end position="568"/>
    </location>
</feature>
<feature type="short sequence motif" description="SLAM-like motif">
    <location>
        <begin position="586"/>
        <end position="591"/>
    </location>
</feature>
<feature type="modified residue" description="Phosphotyrosine" evidence="1">
    <location>
        <position position="565"/>
    </location>
</feature>
<feature type="modified residue" description="Phosphotyrosine" evidence="1">
    <location>
        <position position="588"/>
    </location>
</feature>
<feature type="glycosylation site" description="N-linked (GlcNAc...) asparagine" evidence="2">
    <location>
        <position position="140"/>
    </location>
</feature>
<feature type="glycosylation site" description="N-linked (GlcNAc...) asparagine" evidence="2">
    <location>
        <position position="179"/>
    </location>
</feature>
<feature type="glycosylation site" description="N-linked (GlcNAc...) asparagine" evidence="2">
    <location>
        <position position="230"/>
    </location>
</feature>
<feature type="glycosylation site" description="N-linked (GlcNAc...) asparagine" evidence="2">
    <location>
        <position position="290"/>
    </location>
</feature>
<feature type="glycosylation site" description="N-linked (GlcNAc...) asparagine" evidence="2">
    <location>
        <position position="360"/>
    </location>
</feature>
<feature type="glycosylation site" description="N-linked (GlcNAc...) asparagine" evidence="2">
    <location>
        <position position="367"/>
    </location>
</feature>
<feature type="glycosylation site" description="N-linked (GlcNAc...) asparagine" evidence="2">
    <location>
        <position position="385"/>
    </location>
</feature>
<feature type="disulfide bond" evidence="3">
    <location>
        <begin position="44"/>
        <end position="104"/>
    </location>
</feature>
<feature type="disulfide bond" evidence="3">
    <location>
        <begin position="166"/>
        <end position="299"/>
    </location>
</feature>
<feature type="disulfide bond" evidence="3">
    <location>
        <begin position="171"/>
        <end position="231"/>
    </location>
</feature>
<feature type="disulfide bond" evidence="3">
    <location>
        <begin position="293"/>
        <end position="342"/>
    </location>
</feature>
<feature type="disulfide bond" evidence="3">
    <location>
        <begin position="401"/>
        <end position="446"/>
    </location>
</feature>
<feature type="splice variant" id="VSP_002566" description="In isoform Short." evidence="5">
    <original>LLLLLPPLLCGRVGAKEQKDYLLTMQKSVTVQEGLCVSVLCSFSYPQNGWTASDPVHGYWFRAGDHVSRNIPVATNNPARAVQEETRDRFHLLGDPQNKDCTLSIRDTRESDAGTYVFCVERGNMKWNYKYDQLSVNV</original>
    <variation>PLLWANEERDSGGWADPRFS</variation>
    <location>
        <begin position="4"/>
        <end position="141"/>
    </location>
</feature>
<feature type="sequence variant" id="VAR_049931" description="In dbSNP:rs2034891.">
    <original>P</original>
    <variation>H</variation>
    <location>
        <position position="81"/>
    </location>
</feature>
<feature type="sequence variant" id="VAR_014259" description="In dbSNP:rs2034891.">
    <original>P</original>
    <variation>T</variation>
    <location>
        <position position="81"/>
    </location>
</feature>
<feature type="sequence variant" id="VAR_049932" description="In dbSNP:rs3810110.">
    <original>A</original>
    <variation>V</variation>
    <location>
        <position position="82"/>
    </location>
</feature>
<feature type="sequence variant" id="VAR_024501" description="In dbSNP:rs6509544.">
    <original>H</original>
    <variation>Q</variation>
    <location>
        <position position="217"/>
    </location>
</feature>
<feature type="sequence variant" id="VAR_049933" description="In dbSNP:rs6509544.">
    <original>G</original>
    <variation>R</variation>
    <location>
        <position position="218"/>
    </location>
</feature>
<feature type="sequence variant" id="VAR_049934" description="In dbSNP:rs11668530.">
    <original>H</original>
    <variation>Y</variation>
    <location>
        <position position="398"/>
    </location>
</feature>
<feature type="sequence variant" id="VAR_020088" description="In dbSNP:rs3829658.">
    <original>T</original>
    <variation>M</variation>
    <location>
        <position position="478"/>
    </location>
</feature>
<feature type="sequence variant" id="VAR_020089" description="In dbSNP:rs3752135.">
    <original>Y</original>
    <variation>S</variation>
    <location>
        <position position="494"/>
    </location>
</feature>
<feature type="sequence variant" id="VAR_061327" description="In dbSNP:rs57043266.">
    <original>P</original>
    <variation>Q</variation>
    <location>
        <position position="546"/>
    </location>
</feature>
<feature type="sequence variant" id="VAR_049935" description="In dbSNP:rs7245807.">
    <original>Y</original>
    <variation>C</variation>
    <location>
        <position position="586"/>
    </location>
</feature>
<feature type="sequence conflict" description="In Ref. 3; AAQ88507." evidence="5" ref="3">
    <original>R</original>
    <variation>W</variation>
    <location>
        <position position="528"/>
    </location>
</feature>
<comment type="function">
    <text>Putative adhesion molecule that mediates sialic-acid dependent binding to cells. The sialic acid recognition site may be masked by cis interactions with sialic acids on the same cell surface.</text>
</comment>
<comment type="interaction">
    <interactant intactId="EBI-17640454">
        <id>Q96PQ1</id>
    </interactant>
    <interactant intactId="EBI-2876502">
        <id>Q96CM8</id>
        <label>ACSF2</label>
    </interactant>
    <organismsDiffer>false</organismsDiffer>
    <experiments>3</experiments>
</comment>
<comment type="interaction">
    <interactant intactId="EBI-17640454">
        <id>Q96PQ1</id>
    </interactant>
    <interactant intactId="EBI-10827839">
        <id>Q15848</id>
        <label>ADIPOQ</label>
    </interactant>
    <organismsDiffer>false</organismsDiffer>
    <experiments>3</experiments>
</comment>
<comment type="interaction">
    <interactant intactId="EBI-17640454">
        <id>Q96PQ1</id>
    </interactant>
    <interactant intactId="EBI-2606700">
        <id>P18859</id>
        <label>ATP5PF</label>
    </interactant>
    <organismsDiffer>false</organismsDiffer>
    <experiments>3</experiments>
</comment>
<comment type="interaction">
    <interactant intactId="EBI-17640454">
        <id>Q96PQ1</id>
    </interactant>
    <interactant intactId="EBI-358858">
        <id>O14735</id>
        <label>CDIPT</label>
    </interactant>
    <organismsDiffer>false</organismsDiffer>
    <experiments>3</experiments>
</comment>
<comment type="interaction">
    <interactant intactId="EBI-17640454">
        <id>Q96PQ1</id>
    </interactant>
    <interactant intactId="EBI-2114729">
        <id>Q6UXB4</id>
        <label>CLEC4G</label>
    </interactant>
    <organismsDiffer>false</organismsDiffer>
    <experiments>3</experiments>
</comment>
<comment type="interaction">
    <interactant intactId="EBI-17640454">
        <id>Q96PQ1</id>
    </interactant>
    <interactant intactId="EBI-8639143">
        <id>Q96LL9</id>
        <label>DNAJC30</label>
    </interactant>
    <organismsDiffer>false</organismsDiffer>
    <experiments>3</experiments>
</comment>
<comment type="interaction">
    <interactant intactId="EBI-17640454">
        <id>Q96PQ1</id>
    </interactant>
    <interactant intactId="EBI-12838366">
        <id>Q01638-2</id>
        <label>IL1RL1</label>
    </interactant>
    <organismsDiffer>false</organismsDiffer>
    <experiments>3</experiments>
</comment>
<comment type="interaction">
    <interactant intactId="EBI-17640454">
        <id>Q96PQ1</id>
    </interactant>
    <interactant intactId="EBI-2691601">
        <id>P10620</id>
        <label>MGST1</label>
    </interactant>
    <organismsDiffer>false</organismsDiffer>
    <experiments>3</experiments>
</comment>
<comment type="interaction">
    <interactant intactId="EBI-17640454">
        <id>Q96PQ1</id>
    </interactant>
    <interactant intactId="EBI-11721828">
        <id>Q8IY26</id>
        <label>PLPP6</label>
    </interactant>
    <organismsDiffer>false</organismsDiffer>
    <experiments>3</experiments>
</comment>
<comment type="interaction">
    <interactant intactId="EBI-17640454">
        <id>Q96PQ1</id>
    </interactant>
    <interactant intactId="EBI-12955265">
        <id>Q96GM1</id>
        <label>PLPPR2</label>
    </interactant>
    <organismsDiffer>false</organismsDiffer>
    <experiments>3</experiments>
</comment>
<comment type="interaction">
    <interactant intactId="EBI-17640454">
        <id>Q96PQ1</id>
    </interactant>
    <interactant intactId="EBI-14210385">
        <id>Q59EV6</id>
        <label>PPGB</label>
    </interactant>
    <organismsDiffer>false</organismsDiffer>
    <experiments>3</experiments>
</comment>
<comment type="interaction">
    <interactant intactId="EBI-17640454">
        <id>Q96PQ1</id>
    </interactant>
    <interactant intactId="EBI-14199621">
        <id>Q13635-3</id>
        <label>PTCH1</label>
    </interactant>
    <organismsDiffer>false</organismsDiffer>
    <experiments>3</experiments>
</comment>
<comment type="interaction">
    <interactant intactId="EBI-17640454">
        <id>Q96PQ1</id>
    </interactant>
    <interactant intactId="EBI-10313040">
        <id>Q9NRS4</id>
        <label>TMPRSS4</label>
    </interactant>
    <organismsDiffer>false</organismsDiffer>
    <experiments>3</experiments>
</comment>
<comment type="interaction">
    <interactant intactId="EBI-17640454">
        <id>Q96PQ1</id>
    </interactant>
    <interactant intactId="EBI-7850136">
        <id>Q9Y548</id>
        <label>YIPF1</label>
    </interactant>
    <organismsDiffer>false</organismsDiffer>
    <experiments>3</experiments>
</comment>
<comment type="subcellular location">
    <subcellularLocation>
        <location>Membrane</location>
        <topology>Single-pass type I membrane protein</topology>
    </subcellularLocation>
</comment>
<comment type="alternative products">
    <event type="alternative splicing"/>
    <isoform>
        <id>Q96PQ1-1</id>
        <name>Long</name>
        <name>SLG-L</name>
        <sequence type="displayed"/>
    </isoform>
    <isoform>
        <id>Q96PQ1-2</id>
        <name>Short</name>
        <name>SLG-S</name>
        <sequence type="described" ref="VSP_002566"/>
    </isoform>
</comment>
<comment type="tissue specificity">
    <text>Isoform Short is highly expressed in spleen, small intestine and adrenal gland; it is lower expressed in thyroid, placenta, brain, stomach, bone marrow, spinal cord and breast. Isoform Long is highly expressed in spleen, small intestine and bone marrow; it is lower expressed in thyroid, placenta, thymus, trachea, stomach, lung, adrenal gland, fetal brain and testis.</text>
</comment>
<comment type="domain">
    <text>Contains 1 copy of a cytoplasmic motif that is referred to as the immunoreceptor tyrosine-based inhibitor motif (ITIM). This motif is involved in modulation of cellular responses. The phosphorylated ITIM motif can bind the SH2 domain of several SH2-containing phosphatases.</text>
</comment>
<comment type="similarity">
    <text evidence="5">Belongs to the immunoglobulin superfamily. SIGLEC (sialic acid binding Ig-like lectin) family.</text>
</comment>
<comment type="online information" name="Functional Glycomics Gateway - Glycan Binding">
    <link uri="http://www.functionalglycomics.org/glycomics/GBPServlet?&amp;operationType=view&amp;cbpId=cbp_hum_Itlect_276"/>
    <text>Siglec-L1</text>
</comment>